<gene>
    <name evidence="2" type="primary">hda</name>
    <name type="ordered locus">SeSA_A2733</name>
</gene>
<comment type="function">
    <text evidence="1">Mediates the interaction of DNA replication initiator protein DnaA with DNA polymerase subunit beta sliding clamp (dnaN). Stimulates hydrolysis of ATP-DnaA to ADP-DnaA, rendering DnaA inactive for reinitiation, a process called regulatory inhibition of DnaA or RIDA (By similarity).</text>
</comment>
<comment type="subunit">
    <text evidence="2">The active form seems to be an ADP-bound monomer. Forms the RIDA complex (regulatory inactivation of DnaA) of ATP-DnaA, ADP-Hda and the DNA-loaded beta sliding clamp (dnaN).</text>
</comment>
<comment type="similarity">
    <text evidence="2">Belongs to the DnaA family. HdA subfamily.</text>
</comment>
<dbReference type="EMBL" id="CP001127">
    <property type="protein sequence ID" value="ACF89822.1"/>
    <property type="molecule type" value="Genomic_DNA"/>
</dbReference>
<dbReference type="SMR" id="B4TR72"/>
<dbReference type="KEGG" id="sew:SeSA_A2733"/>
<dbReference type="HOGENOM" id="CLU_072265_1_1_6"/>
<dbReference type="Proteomes" id="UP000001865">
    <property type="component" value="Chromosome"/>
</dbReference>
<dbReference type="GO" id="GO:0006270">
    <property type="term" value="P:DNA replication initiation"/>
    <property type="evidence" value="ECO:0007669"/>
    <property type="project" value="TreeGrafter"/>
</dbReference>
<dbReference type="GO" id="GO:0032297">
    <property type="term" value="P:negative regulation of DNA-templated DNA replication initiation"/>
    <property type="evidence" value="ECO:0007669"/>
    <property type="project" value="InterPro"/>
</dbReference>
<dbReference type="FunFam" id="1.10.8.60:FF:000024">
    <property type="entry name" value="DnaA regulatory inactivator Hda"/>
    <property type="match status" value="1"/>
</dbReference>
<dbReference type="FunFam" id="3.40.50.300:FF:000452">
    <property type="entry name" value="DnaA regulatory inactivator Hda"/>
    <property type="match status" value="1"/>
</dbReference>
<dbReference type="Gene3D" id="1.10.8.60">
    <property type="match status" value="1"/>
</dbReference>
<dbReference type="Gene3D" id="3.40.50.300">
    <property type="entry name" value="P-loop containing nucleotide triphosphate hydrolases"/>
    <property type="match status" value="1"/>
</dbReference>
<dbReference type="HAMAP" id="MF_01158">
    <property type="entry name" value="Hda"/>
    <property type="match status" value="1"/>
</dbReference>
<dbReference type="InterPro" id="IPR020591">
    <property type="entry name" value="Chromosome_initiator_DnaA-like"/>
</dbReference>
<dbReference type="InterPro" id="IPR013317">
    <property type="entry name" value="DnaA_dom"/>
</dbReference>
<dbReference type="InterPro" id="IPR017788">
    <property type="entry name" value="Hda"/>
</dbReference>
<dbReference type="InterPro" id="IPR022864">
    <property type="entry name" value="Hda_Enterobact"/>
</dbReference>
<dbReference type="InterPro" id="IPR055199">
    <property type="entry name" value="Hda_lid"/>
</dbReference>
<dbReference type="InterPro" id="IPR027417">
    <property type="entry name" value="P-loop_NTPase"/>
</dbReference>
<dbReference type="NCBIfam" id="TIGR03420">
    <property type="entry name" value="DnaA_homol_Hda"/>
    <property type="match status" value="1"/>
</dbReference>
<dbReference type="NCBIfam" id="NF005982">
    <property type="entry name" value="PRK08084.1"/>
    <property type="match status" value="1"/>
</dbReference>
<dbReference type="PANTHER" id="PTHR30050">
    <property type="entry name" value="CHROMOSOMAL REPLICATION INITIATOR PROTEIN DNAA"/>
    <property type="match status" value="1"/>
</dbReference>
<dbReference type="PANTHER" id="PTHR30050:SF5">
    <property type="entry name" value="DNAA REGULATORY INACTIVATOR HDA"/>
    <property type="match status" value="1"/>
</dbReference>
<dbReference type="Pfam" id="PF00308">
    <property type="entry name" value="Bac_DnaA"/>
    <property type="match status" value="1"/>
</dbReference>
<dbReference type="Pfam" id="PF22688">
    <property type="entry name" value="Hda_lid"/>
    <property type="match status" value="1"/>
</dbReference>
<dbReference type="PRINTS" id="PR00051">
    <property type="entry name" value="DNAA"/>
</dbReference>
<dbReference type="SUPFAM" id="SSF52540">
    <property type="entry name" value="P-loop containing nucleoside triphosphate hydrolases"/>
    <property type="match status" value="1"/>
</dbReference>
<proteinExistence type="inferred from homology"/>
<reference key="1">
    <citation type="journal article" date="2011" name="J. Bacteriol.">
        <title>Comparative genomics of 28 Salmonella enterica isolates: evidence for CRISPR-mediated adaptive sublineage evolution.</title>
        <authorList>
            <person name="Fricke W.F."/>
            <person name="Mammel M.K."/>
            <person name="McDermott P.F."/>
            <person name="Tartera C."/>
            <person name="White D.G."/>
            <person name="Leclerc J.E."/>
            <person name="Ravel J."/>
            <person name="Cebula T.A."/>
        </authorList>
    </citation>
    <scope>NUCLEOTIDE SEQUENCE [LARGE SCALE GENOMIC DNA]</scope>
    <source>
        <strain>CVM19633</strain>
    </source>
</reference>
<organism>
    <name type="scientific">Salmonella schwarzengrund (strain CVM19633)</name>
    <dbReference type="NCBI Taxonomy" id="439843"/>
    <lineage>
        <taxon>Bacteria</taxon>
        <taxon>Pseudomonadati</taxon>
        <taxon>Pseudomonadota</taxon>
        <taxon>Gammaproteobacteria</taxon>
        <taxon>Enterobacterales</taxon>
        <taxon>Enterobacteriaceae</taxon>
        <taxon>Salmonella</taxon>
    </lineage>
</organism>
<evidence type="ECO:0000250" key="1"/>
<evidence type="ECO:0000255" key="2">
    <source>
        <dbReference type="HAMAP-Rule" id="MF_01158"/>
    </source>
</evidence>
<accession>B4TR72</accession>
<feature type="chain" id="PRO_1000137823" description="DnaA regulatory inactivator Hda">
    <location>
        <begin position="1"/>
        <end position="241"/>
    </location>
</feature>
<name>HDA_SALSV</name>
<keyword id="KW-0235">DNA replication</keyword>
<keyword id="KW-0236">DNA replication inhibitor</keyword>
<sequence>MSSWVEVSLNTPAQLSLPLYLPDDETFASFWPGDNASLLAALQNVLRQEHSGYIYLWAREGAGRSHLLHAACAELSQRGDAVGYVPLDKRTWFVPEVLDGMEHLSLVCIDNIECVAGDELWEMAIFDLYNRILESGKTRLLITGDRPPRQLNLGLPDLASRLDWGQIYKLQPLSDEDKLQALQLRARLRGFELPEDVGRFLLKRLDREMRTLFMTLDQLDHASITAQRKLTIPFVKEILKL</sequence>
<protein>
    <recommendedName>
        <fullName evidence="2">DnaA regulatory inactivator Hda</fullName>
    </recommendedName>
</protein>